<organism>
    <name type="scientific">Drosophila erecta</name>
    <name type="common">Fruit fly</name>
    <dbReference type="NCBI Taxonomy" id="7220"/>
    <lineage>
        <taxon>Eukaryota</taxon>
        <taxon>Metazoa</taxon>
        <taxon>Ecdysozoa</taxon>
        <taxon>Arthropoda</taxon>
        <taxon>Hexapoda</taxon>
        <taxon>Insecta</taxon>
        <taxon>Pterygota</taxon>
        <taxon>Neoptera</taxon>
        <taxon>Endopterygota</taxon>
        <taxon>Diptera</taxon>
        <taxon>Brachycera</taxon>
        <taxon>Muscomorpha</taxon>
        <taxon>Ephydroidea</taxon>
        <taxon>Drosophilidae</taxon>
        <taxon>Drosophila</taxon>
        <taxon>Sophophora</taxon>
    </lineage>
</organism>
<keyword id="KW-0391">Immunity</keyword>
<keyword id="KW-0399">Innate immunity</keyword>
<keyword id="KW-0964">Secreted</keyword>
<keyword id="KW-0732">Signal</keyword>
<name>TOTM_DROER</name>
<feature type="signal peptide" evidence="2">
    <location>
        <begin position="1"/>
        <end position="23"/>
    </location>
</feature>
<feature type="chain" id="PRO_0000354995" description="Protein Turandot M">
    <location>
        <begin position="24"/>
        <end position="131"/>
    </location>
</feature>
<comment type="function">
    <text evidence="1">A humoral factor that may play a role in stress tolerance. Requires Mekk1 expression in the fat body to regulate response to septic injury and consequent immune response (By similarity).</text>
</comment>
<comment type="subcellular location">
    <subcellularLocation>
        <location evidence="1">Secreted</location>
    </subcellularLocation>
</comment>
<comment type="similarity">
    <text evidence="2">Belongs to the Turandot family.</text>
</comment>
<gene>
    <name evidence="1" type="primary">TotM</name>
    <name type="ORF">GG25068</name>
</gene>
<accession>B3N4V1</accession>
<dbReference type="EMBL" id="CH954177">
    <property type="protein sequence ID" value="EDV57853.1"/>
    <property type="molecule type" value="Genomic_DNA"/>
</dbReference>
<dbReference type="SMR" id="B3N4V1"/>
<dbReference type="EnsemblMetazoa" id="FBtr0145122">
    <property type="protein sequence ID" value="FBpp0143614"/>
    <property type="gene ID" value="FBgn0117197"/>
</dbReference>
<dbReference type="EnsemblMetazoa" id="XM_001968758.3">
    <property type="protein sequence ID" value="XP_001968794.1"/>
    <property type="gene ID" value="LOC6540667"/>
</dbReference>
<dbReference type="EnsemblMetazoa" id="XM_026979812.1">
    <property type="protein sequence ID" value="XP_026835613.1"/>
    <property type="gene ID" value="LOC113564226"/>
</dbReference>
<dbReference type="GeneID" id="6540667"/>
<dbReference type="KEGG" id="der:6540667"/>
<dbReference type="HOGENOM" id="CLU_158853_0_0_1"/>
<dbReference type="OMA" id="HIFRRYK"/>
<dbReference type="OrthoDB" id="7855545at2759"/>
<dbReference type="PhylomeDB" id="B3N4V1"/>
<dbReference type="Proteomes" id="UP000008711">
    <property type="component" value="Unassembled WGS sequence"/>
</dbReference>
<dbReference type="GO" id="GO:0005615">
    <property type="term" value="C:extracellular space"/>
    <property type="evidence" value="ECO:0000250"/>
    <property type="project" value="UniProtKB"/>
</dbReference>
<dbReference type="GO" id="GO:0034605">
    <property type="term" value="P:cellular response to heat"/>
    <property type="evidence" value="ECO:0007669"/>
    <property type="project" value="UniProtKB-ARBA"/>
</dbReference>
<dbReference type="GO" id="GO:0045087">
    <property type="term" value="P:innate immune response"/>
    <property type="evidence" value="ECO:0007669"/>
    <property type="project" value="UniProtKB-KW"/>
</dbReference>
<dbReference type="GO" id="GO:0009617">
    <property type="term" value="P:response to bacterium"/>
    <property type="evidence" value="ECO:0007669"/>
    <property type="project" value="UniProtKB-ARBA"/>
</dbReference>
<dbReference type="GO" id="GO:0009408">
    <property type="term" value="P:response to heat"/>
    <property type="evidence" value="ECO:0000250"/>
    <property type="project" value="UniProtKB"/>
</dbReference>
<dbReference type="InterPro" id="IPR010825">
    <property type="entry name" value="Turandot"/>
</dbReference>
<dbReference type="Pfam" id="PF07240">
    <property type="entry name" value="Turandot"/>
    <property type="match status" value="1"/>
</dbReference>
<proteinExistence type="inferred from homology"/>
<evidence type="ECO:0000250" key="1">
    <source>
        <dbReference type="UniProtKB" id="Q9VMR8"/>
    </source>
</evidence>
<evidence type="ECO:0000255" key="2"/>
<evidence type="ECO:0000312" key="3">
    <source>
        <dbReference type="EMBL" id="EDV57853.1"/>
    </source>
</evidence>
<sequence>MNPAIYLSCLVVFSLLLLGKVNAEDDDEFRTEKQRLLRVYGDSSVDEATRYRNVDDLVKFYDKYSTLLPWKPDLTQRAQDLLRRYKEETARAVLVDGAPAQGGFWLPLVKLLIVQLGVEIASEGFKRAIES</sequence>
<reference evidence="3" key="1">
    <citation type="journal article" date="2007" name="Nature">
        <title>Evolution of genes and genomes on the Drosophila phylogeny.</title>
        <authorList>
            <consortium name="Drosophila 12 genomes consortium"/>
        </authorList>
    </citation>
    <scope>NUCLEOTIDE SEQUENCE [LARGE SCALE GENOMIC DNA]</scope>
    <source>
        <strain evidence="3">Tucson 14021-0224.01</strain>
    </source>
</reference>
<protein>
    <recommendedName>
        <fullName>Protein Turandot M</fullName>
    </recommendedName>
</protein>